<evidence type="ECO:0000250" key="1">
    <source>
        <dbReference type="UniProtKB" id="P13497"/>
    </source>
</evidence>
<evidence type="ECO:0000250" key="2">
    <source>
        <dbReference type="UniProtKB" id="Q18206"/>
    </source>
</evidence>
<evidence type="ECO:0000255" key="3">
    <source>
        <dbReference type="PROSITE-ProRule" id="PRU00059"/>
    </source>
</evidence>
<evidence type="ECO:0000255" key="4">
    <source>
        <dbReference type="PROSITE-ProRule" id="PRU00076"/>
    </source>
</evidence>
<evidence type="ECO:0000255" key="5">
    <source>
        <dbReference type="PROSITE-ProRule" id="PRU00210"/>
    </source>
</evidence>
<evidence type="ECO:0000255" key="6">
    <source>
        <dbReference type="PROSITE-ProRule" id="PRU00498"/>
    </source>
</evidence>
<evidence type="ECO:0000255" key="7">
    <source>
        <dbReference type="PROSITE-ProRule" id="PRU01211"/>
    </source>
</evidence>
<evidence type="ECO:0000269" key="8">
    <source>
    </source>
</evidence>
<evidence type="ECO:0000305" key="9"/>
<evidence type="ECO:0000312" key="10">
    <source>
        <dbReference type="EMBL" id="ACZ64273.1"/>
    </source>
</evidence>
<evidence type="ECO:0000312" key="11">
    <source>
        <dbReference type="Proteomes" id="UP000006672"/>
    </source>
</evidence>
<evidence type="ECO:0000312" key="12">
    <source>
        <dbReference type="WormBase" id="Bm2394"/>
    </source>
</evidence>
<reference evidence="10" key="1">
    <citation type="journal article" date="2011" name="Parasitology">
        <title>The astacin metalloprotease moulting enzyme NAS-36 is required for normal cuticle ecdysis in free-living and parasitic nematodes.</title>
        <authorList>
            <person name="Stepek G."/>
            <person name="McCormack G."/>
            <person name="Birnie A.J."/>
            <person name="Page A.P."/>
        </authorList>
    </citation>
    <scope>NUCLEOTIDE SEQUENCE [GENOMIC DNA]</scope>
    <scope>FUNCTION</scope>
    <scope>CATALYTIC ACTIVITY</scope>
    <scope>ACTIVITY REGULATION</scope>
</reference>
<reference evidence="11" key="2">
    <citation type="journal article" date="2007" name="Science">
        <title>Draft genome of the filarial nematode parasite Brugia malayi.</title>
        <authorList>
            <person name="Ghedin E."/>
            <person name="Wang S."/>
            <person name="Spiro D."/>
            <person name="Caler E."/>
            <person name="Zhao Q."/>
            <person name="Crabtree J."/>
            <person name="Allen J.E."/>
            <person name="Delcher A.L."/>
            <person name="Guiliano D.B."/>
            <person name="Miranda-Saavedra D."/>
            <person name="Angiuoli S.V."/>
            <person name="Creasy T."/>
            <person name="Amedeo P."/>
            <person name="Haas B."/>
            <person name="El-Sayed N.M."/>
            <person name="Wortman J.R."/>
            <person name="Feldblyum T."/>
            <person name="Tallon L."/>
            <person name="Schatz M."/>
            <person name="Shumway M."/>
            <person name="Koo H."/>
            <person name="Salzberg S.L."/>
            <person name="Schobel S."/>
            <person name="Pertea M."/>
            <person name="Pop M."/>
            <person name="White O."/>
            <person name="Barton G.J."/>
            <person name="Carlow C.K.S."/>
            <person name="Crawford M.J."/>
            <person name="Daub J."/>
            <person name="Dimmic M.W."/>
            <person name="Estes C.F."/>
            <person name="Foster J.M."/>
            <person name="Ganatra M."/>
            <person name="Gregory W.F."/>
            <person name="Johnson N.M."/>
            <person name="Jin J."/>
            <person name="Komuniecki R."/>
            <person name="Korf I."/>
            <person name="Kumar S."/>
            <person name="Laney S."/>
            <person name="Li B.-W."/>
            <person name="Li W."/>
            <person name="Lindblom T.H."/>
            <person name="Lustigman S."/>
            <person name="Ma D."/>
            <person name="Maina C.V."/>
            <person name="Martin D.M."/>
            <person name="McCarter J.P."/>
            <person name="McReynolds L."/>
            <person name="Mitreva M."/>
            <person name="Nutman T.B."/>
            <person name="Parkinson J."/>
            <person name="Peregrin-Alvarez J.M."/>
            <person name="Poole C."/>
            <person name="Ren Q."/>
            <person name="Saunders L."/>
            <person name="Sluder A.E."/>
            <person name="Smith K."/>
            <person name="Stanke M."/>
            <person name="Unnasch T.R."/>
            <person name="Ware J."/>
            <person name="Wei A.D."/>
            <person name="Weil G."/>
            <person name="Williams D.J."/>
            <person name="Zhang Y."/>
            <person name="Williams S.A."/>
            <person name="Fraser-Liggett C."/>
            <person name="Slatko B."/>
            <person name="Blaxter M.L."/>
            <person name="Scott A.L."/>
        </authorList>
    </citation>
    <scope>NUCLEOTIDE SEQUENCE [LARGE SCALE GENOMIC DNA]</scope>
</reference>
<organism evidence="10">
    <name type="scientific">Brugia malayi</name>
    <name type="common">Filarial nematode worm</name>
    <dbReference type="NCBI Taxonomy" id="6279"/>
    <lineage>
        <taxon>Eukaryota</taxon>
        <taxon>Metazoa</taxon>
        <taxon>Ecdysozoa</taxon>
        <taxon>Nematoda</taxon>
        <taxon>Chromadorea</taxon>
        <taxon>Rhabditida</taxon>
        <taxon>Spirurina</taxon>
        <taxon>Spiruromorpha</taxon>
        <taxon>Filarioidea</taxon>
        <taxon>Onchocercidae</taxon>
        <taxon>Brugia</taxon>
    </lineage>
</organism>
<keyword id="KW-0165">Cleavage on pair of basic residues</keyword>
<keyword id="KW-1015">Disulfide bond</keyword>
<keyword id="KW-0245">EGF-like domain</keyword>
<keyword id="KW-0325">Glycoprotein</keyword>
<keyword id="KW-0378">Hydrolase</keyword>
<keyword id="KW-0479">Metal-binding</keyword>
<keyword id="KW-0482">Metalloprotease</keyword>
<keyword id="KW-0645">Protease</keyword>
<keyword id="KW-1185">Reference proteome</keyword>
<keyword id="KW-0964">Secreted</keyword>
<keyword id="KW-0862">Zinc</keyword>
<keyword id="KW-0865">Zymogen</keyword>
<accession>D5FM38</accession>
<name>NAS36_BRUMA</name>
<gene>
    <name evidence="12" type="primary">nas-36</name>
    <name type="synonym">Bm1_07340</name>
    <name evidence="12" type="ORF">Bm2394</name>
</gene>
<proteinExistence type="evidence at protein level"/>
<protein>
    <recommendedName>
        <fullName evidence="9">Zinc metalloproteinase nas-36</fullName>
        <ecNumber evidence="8">3.4.24.-</ecNumber>
    </recommendedName>
    <alternativeName>
        <fullName evidence="2">Nematode astacin 36</fullName>
    </alternativeName>
</protein>
<comment type="function">
    <text evidence="8">Metalloprotease. Involved in molting, a process during larval stages in which a new cuticle is formed and the old cuticle is shed.</text>
</comment>
<comment type="cofactor">
    <cofactor evidence="7">
        <name>Zn(2+)</name>
        <dbReference type="ChEBI" id="CHEBI:29105"/>
    </cofactor>
    <text evidence="7">Binds 1 zinc ion per subunit.</text>
</comment>
<comment type="activity regulation">
    <text evidence="8">Inhibited by 1,10-phenanthroline.</text>
</comment>
<comment type="subcellular location">
    <subcellularLocation>
        <location evidence="9">Secreted</location>
    </subcellularLocation>
</comment>
<feature type="propeptide" id="PRO_0000442250" evidence="1">
    <location>
        <begin position="1"/>
        <end position="95"/>
    </location>
</feature>
<feature type="chain" id="PRO_0000442251" description="Zinc metalloproteinase nas-36">
    <location>
        <begin position="96"/>
        <end position="581"/>
    </location>
</feature>
<feature type="domain" description="Peptidase M12A" evidence="7">
    <location>
        <begin position="97"/>
        <end position="290"/>
    </location>
</feature>
<feature type="domain" description="EGF-like" evidence="4">
    <location>
        <begin position="285"/>
        <end position="325"/>
    </location>
</feature>
<feature type="domain" description="CUB" evidence="3">
    <location>
        <begin position="336"/>
        <end position="449"/>
    </location>
</feature>
<feature type="domain" description="TSP type-1" evidence="5">
    <location>
        <begin position="474"/>
        <end position="523"/>
    </location>
</feature>
<feature type="active site" evidence="7">
    <location>
        <position position="187"/>
    </location>
</feature>
<feature type="binding site" evidence="7">
    <location>
        <position position="186"/>
    </location>
    <ligand>
        <name>Zn(2+)</name>
        <dbReference type="ChEBI" id="CHEBI:29105"/>
        <note>catalytic</note>
    </ligand>
</feature>
<feature type="binding site" evidence="7">
    <location>
        <position position="190"/>
    </location>
    <ligand>
        <name>Zn(2+)</name>
        <dbReference type="ChEBI" id="CHEBI:29105"/>
        <note>catalytic</note>
    </ligand>
</feature>
<feature type="binding site" evidence="7">
    <location>
        <position position="196"/>
    </location>
    <ligand>
        <name>Zn(2+)</name>
        <dbReference type="ChEBI" id="CHEBI:29105"/>
        <note>catalytic</note>
    </ligand>
</feature>
<feature type="glycosylation site" description="N-linked (GlcNAc...) asparagine" evidence="6">
    <location>
        <position position="67"/>
    </location>
</feature>
<feature type="glycosylation site" description="N-linked (GlcNAc...) asparagine" evidence="6">
    <location>
        <position position="418"/>
    </location>
</feature>
<feature type="disulfide bond" evidence="7">
    <location>
        <begin position="137"/>
        <end position="289"/>
    </location>
</feature>
<feature type="disulfide bond" evidence="7">
    <location>
        <begin position="159"/>
        <end position="178"/>
    </location>
</feature>
<feature type="disulfide bond" evidence="4">
    <location>
        <begin position="293"/>
        <end position="313"/>
    </location>
</feature>
<feature type="disulfide bond" evidence="4">
    <location>
        <begin position="315"/>
        <end position="324"/>
    </location>
</feature>
<feature type="disulfide bond" evidence="3">
    <location>
        <begin position="336"/>
        <end position="364"/>
    </location>
</feature>
<feature type="disulfide bond" evidence="5">
    <location>
        <begin position="486"/>
        <end position="517"/>
    </location>
</feature>
<feature type="disulfide bond" evidence="5">
    <location>
        <begin position="490"/>
        <end position="522"/>
    </location>
</feature>
<feature type="disulfide bond" evidence="5">
    <location>
        <begin position="502"/>
        <end position="507"/>
    </location>
</feature>
<sequence>MKEIAHSQAYGNRVFSRDSAVDSKKDVSISAEQPKTISKLTPYLFEGDIFLSTKQAMNILDSLASKNKTNKKGQQRMAHDAPLYLFRGANEKGKRFAAEYDAKWFQFPIKYRFDESLDILHISQILKALEIWQSNTCIKFENDQEASGDYIEFFEGDGCYSMVGRFGGRQGISIGKGCERTGTIIHEVGHTLGLWHEQSRPDAEEYITVVKEYIIPSYISEFLTRSEHEITTFNVPYDLGSVMHYGSTAFSIDQRSKTLLTKDPFYQMTIGQRDSLSFYNIKLINEAYCKGDCKEKNECKNGGYLNPSNCQSCLCPSGFGGSKCEMHASSESNSKCGGTLKAIIDWQYIESPGYPDGYPTNVICNWLIETDKEERIEISFEDNFGIFCSSTCVDYIELKIGNDLANTGYRICCYDKPNDSLVSAKYQAVIIFRATTGEDTGFKLKFRKTMKPAQTTPSLPKTTTTAPHTTIVGNDIWSEWGEWSQCSRSCGACGIKSRLRICKTAQCSGKVQQFLTCNLQACPVDIRCTKVKFKNRLCADGNTCGKPGELLSSCSRPSCCPPFENVDGKCQTDQPLLIPLE</sequence>
<dbReference type="EC" id="3.4.24.-" evidence="8"/>
<dbReference type="EMBL" id="FJ812520">
    <property type="protein sequence ID" value="ACZ64273.1"/>
    <property type="molecule type" value="Genomic_DNA"/>
</dbReference>
<dbReference type="EMBL" id="LN856752">
    <property type="protein sequence ID" value="CDQ04813.2"/>
    <property type="molecule type" value="Genomic_DNA"/>
</dbReference>
<dbReference type="SMR" id="D5FM38"/>
<dbReference type="STRING" id="6279.D5FM38"/>
<dbReference type="MEROPS" id="M12.319"/>
<dbReference type="GlyCosmos" id="D5FM38">
    <property type="glycosylation" value="2 sites, No reported glycans"/>
</dbReference>
<dbReference type="EnsemblMetazoa" id="Bm2394.1">
    <property type="protein sequence ID" value="Bm2394.1"/>
    <property type="gene ID" value="WBGene00222655"/>
</dbReference>
<dbReference type="GeneID" id="6096396"/>
<dbReference type="KEGG" id="bmy:BM_BM2394"/>
<dbReference type="CTD" id="6096396"/>
<dbReference type="WormBase" id="Bm2394">
    <property type="protein sequence ID" value="BM02521"/>
    <property type="gene ID" value="WBGene00222655"/>
</dbReference>
<dbReference type="InParanoid" id="D5FM38"/>
<dbReference type="OrthoDB" id="291007at2759"/>
<dbReference type="Proteomes" id="UP000006672">
    <property type="component" value="Unassembled WGS sequence"/>
</dbReference>
<dbReference type="GO" id="GO:0005576">
    <property type="term" value="C:extracellular region"/>
    <property type="evidence" value="ECO:0007669"/>
    <property type="project" value="UniProtKB-SubCell"/>
</dbReference>
<dbReference type="GO" id="GO:0004222">
    <property type="term" value="F:metalloendopeptidase activity"/>
    <property type="evidence" value="ECO:0007669"/>
    <property type="project" value="InterPro"/>
</dbReference>
<dbReference type="GO" id="GO:0008270">
    <property type="term" value="F:zinc ion binding"/>
    <property type="evidence" value="ECO:0007669"/>
    <property type="project" value="InterPro"/>
</dbReference>
<dbReference type="GO" id="GO:0006508">
    <property type="term" value="P:proteolysis"/>
    <property type="evidence" value="ECO:0007669"/>
    <property type="project" value="UniProtKB-KW"/>
</dbReference>
<dbReference type="CDD" id="cd00041">
    <property type="entry name" value="CUB"/>
    <property type="match status" value="1"/>
</dbReference>
<dbReference type="CDD" id="cd04280">
    <property type="entry name" value="ZnMc_astacin_like"/>
    <property type="match status" value="1"/>
</dbReference>
<dbReference type="FunFam" id="3.40.390.10:FF:000028">
    <property type="entry name" value="Zinc metalloproteinase"/>
    <property type="match status" value="1"/>
</dbReference>
<dbReference type="Gene3D" id="3.40.390.10">
    <property type="entry name" value="Collagenase (Catalytic Domain)"/>
    <property type="match status" value="1"/>
</dbReference>
<dbReference type="Gene3D" id="2.60.120.290">
    <property type="entry name" value="Spermadhesin, CUB domain"/>
    <property type="match status" value="1"/>
</dbReference>
<dbReference type="Gene3D" id="2.20.100.10">
    <property type="entry name" value="Thrombospondin type-1 (TSP1) repeat"/>
    <property type="match status" value="1"/>
</dbReference>
<dbReference type="InterPro" id="IPR034035">
    <property type="entry name" value="Astacin-like_dom"/>
</dbReference>
<dbReference type="InterPro" id="IPR000859">
    <property type="entry name" value="CUB_dom"/>
</dbReference>
<dbReference type="InterPro" id="IPR000742">
    <property type="entry name" value="EGF-like_dom"/>
</dbReference>
<dbReference type="InterPro" id="IPR024079">
    <property type="entry name" value="MetalloPept_cat_dom_sf"/>
</dbReference>
<dbReference type="InterPro" id="IPR001506">
    <property type="entry name" value="Peptidase_M12A"/>
</dbReference>
<dbReference type="InterPro" id="IPR006026">
    <property type="entry name" value="Peptidase_Metallo"/>
</dbReference>
<dbReference type="InterPro" id="IPR035914">
    <property type="entry name" value="Sperma_CUB_dom_sf"/>
</dbReference>
<dbReference type="InterPro" id="IPR000884">
    <property type="entry name" value="TSP1_rpt"/>
</dbReference>
<dbReference type="InterPro" id="IPR036383">
    <property type="entry name" value="TSP1_rpt_sf"/>
</dbReference>
<dbReference type="PANTHER" id="PTHR10127">
    <property type="entry name" value="DISCOIDIN, CUB, EGF, LAMININ , AND ZINC METALLOPROTEASE DOMAIN CONTAINING"/>
    <property type="match status" value="1"/>
</dbReference>
<dbReference type="PANTHER" id="PTHR10127:SF849">
    <property type="entry name" value="ZINC METALLOPROTEINASE NAS-36"/>
    <property type="match status" value="1"/>
</dbReference>
<dbReference type="Pfam" id="PF01400">
    <property type="entry name" value="Astacin"/>
    <property type="match status" value="1"/>
</dbReference>
<dbReference type="Pfam" id="PF00431">
    <property type="entry name" value="CUB"/>
    <property type="match status" value="1"/>
</dbReference>
<dbReference type="Pfam" id="PF00090">
    <property type="entry name" value="TSP_1"/>
    <property type="match status" value="1"/>
</dbReference>
<dbReference type="PRINTS" id="PR00480">
    <property type="entry name" value="ASTACIN"/>
</dbReference>
<dbReference type="SMART" id="SM00042">
    <property type="entry name" value="CUB"/>
    <property type="match status" value="1"/>
</dbReference>
<dbReference type="SMART" id="SM00209">
    <property type="entry name" value="TSP1"/>
    <property type="match status" value="1"/>
</dbReference>
<dbReference type="SMART" id="SM00235">
    <property type="entry name" value="ZnMc"/>
    <property type="match status" value="1"/>
</dbReference>
<dbReference type="SUPFAM" id="SSF55486">
    <property type="entry name" value="Metalloproteases ('zincins'), catalytic domain"/>
    <property type="match status" value="1"/>
</dbReference>
<dbReference type="SUPFAM" id="SSF49854">
    <property type="entry name" value="Spermadhesin, CUB domain"/>
    <property type="match status" value="1"/>
</dbReference>
<dbReference type="SUPFAM" id="SSF82895">
    <property type="entry name" value="TSP-1 type 1 repeat"/>
    <property type="match status" value="1"/>
</dbReference>
<dbReference type="PROSITE" id="PS51864">
    <property type="entry name" value="ASTACIN"/>
    <property type="match status" value="1"/>
</dbReference>
<dbReference type="PROSITE" id="PS01180">
    <property type="entry name" value="CUB"/>
    <property type="match status" value="1"/>
</dbReference>
<dbReference type="PROSITE" id="PS00022">
    <property type="entry name" value="EGF_1"/>
    <property type="match status" value="1"/>
</dbReference>
<dbReference type="PROSITE" id="PS01186">
    <property type="entry name" value="EGF_2"/>
    <property type="match status" value="1"/>
</dbReference>
<dbReference type="PROSITE" id="PS50092">
    <property type="entry name" value="TSP1"/>
    <property type="match status" value="1"/>
</dbReference>
<dbReference type="PROSITE" id="PS00142">
    <property type="entry name" value="ZINC_PROTEASE"/>
    <property type="match status" value="1"/>
</dbReference>